<dbReference type="EMBL" id="CP000671">
    <property type="protein sequence ID" value="ABQ98185.1"/>
    <property type="molecule type" value="Genomic_DNA"/>
</dbReference>
<dbReference type="SMR" id="A5UBN4"/>
<dbReference type="KEGG" id="hip:CGSHiEE_03840"/>
<dbReference type="HOGENOM" id="CLU_105066_2_0_6"/>
<dbReference type="GO" id="GO:0005694">
    <property type="term" value="C:chromosome"/>
    <property type="evidence" value="ECO:0007669"/>
    <property type="project" value="InterPro"/>
</dbReference>
<dbReference type="GO" id="GO:0005829">
    <property type="term" value="C:cytosol"/>
    <property type="evidence" value="ECO:0007669"/>
    <property type="project" value="TreeGrafter"/>
</dbReference>
<dbReference type="GO" id="GO:0003677">
    <property type="term" value="F:DNA binding"/>
    <property type="evidence" value="ECO:0007669"/>
    <property type="project" value="UniProtKB-UniRule"/>
</dbReference>
<dbReference type="GO" id="GO:0030527">
    <property type="term" value="F:structural constituent of chromatin"/>
    <property type="evidence" value="ECO:0007669"/>
    <property type="project" value="InterPro"/>
</dbReference>
<dbReference type="GO" id="GO:0006310">
    <property type="term" value="P:DNA recombination"/>
    <property type="evidence" value="ECO:0007669"/>
    <property type="project" value="UniProtKB-UniRule"/>
</dbReference>
<dbReference type="GO" id="GO:0006355">
    <property type="term" value="P:regulation of DNA-templated transcription"/>
    <property type="evidence" value="ECO:0007669"/>
    <property type="project" value="UniProtKB-UniRule"/>
</dbReference>
<dbReference type="GO" id="GO:0006417">
    <property type="term" value="P:regulation of translation"/>
    <property type="evidence" value="ECO:0007669"/>
    <property type="project" value="UniProtKB-UniRule"/>
</dbReference>
<dbReference type="CDD" id="cd13836">
    <property type="entry name" value="IHF_B"/>
    <property type="match status" value="1"/>
</dbReference>
<dbReference type="FunFam" id="4.10.520.10:FF:000003">
    <property type="entry name" value="Integration host factor subunit beta"/>
    <property type="match status" value="1"/>
</dbReference>
<dbReference type="Gene3D" id="4.10.520.10">
    <property type="entry name" value="IHF-like DNA-binding proteins"/>
    <property type="match status" value="1"/>
</dbReference>
<dbReference type="HAMAP" id="MF_00381">
    <property type="entry name" value="IHF_beta"/>
    <property type="match status" value="1"/>
</dbReference>
<dbReference type="InterPro" id="IPR000119">
    <property type="entry name" value="Hist_DNA-bd"/>
</dbReference>
<dbReference type="InterPro" id="IPR020816">
    <property type="entry name" value="Histone-like_DNA-bd_CS"/>
</dbReference>
<dbReference type="InterPro" id="IPR010992">
    <property type="entry name" value="IHF-like_DNA-bd_dom_sf"/>
</dbReference>
<dbReference type="InterPro" id="IPR005685">
    <property type="entry name" value="IHF_beta"/>
</dbReference>
<dbReference type="NCBIfam" id="TIGR00988">
    <property type="entry name" value="hip"/>
    <property type="match status" value="1"/>
</dbReference>
<dbReference type="NCBIfam" id="NF001222">
    <property type="entry name" value="PRK00199.1"/>
    <property type="match status" value="1"/>
</dbReference>
<dbReference type="PANTHER" id="PTHR33175">
    <property type="entry name" value="DNA-BINDING PROTEIN HU"/>
    <property type="match status" value="1"/>
</dbReference>
<dbReference type="PANTHER" id="PTHR33175:SF5">
    <property type="entry name" value="INTEGRATION HOST FACTOR SUBUNIT BETA"/>
    <property type="match status" value="1"/>
</dbReference>
<dbReference type="Pfam" id="PF00216">
    <property type="entry name" value="Bac_DNA_binding"/>
    <property type="match status" value="1"/>
</dbReference>
<dbReference type="PRINTS" id="PR01727">
    <property type="entry name" value="DNABINDINGHU"/>
</dbReference>
<dbReference type="SMART" id="SM00411">
    <property type="entry name" value="BHL"/>
    <property type="match status" value="1"/>
</dbReference>
<dbReference type="SUPFAM" id="SSF47729">
    <property type="entry name" value="IHF-like DNA-binding proteins"/>
    <property type="match status" value="1"/>
</dbReference>
<dbReference type="PROSITE" id="PS00045">
    <property type="entry name" value="HISTONE_LIKE"/>
    <property type="match status" value="1"/>
</dbReference>
<protein>
    <recommendedName>
        <fullName evidence="1">Integration host factor subunit beta</fullName>
        <shortName evidence="1">IHF-beta</shortName>
    </recommendedName>
</protein>
<accession>A5UBN4</accession>
<evidence type="ECO:0000255" key="1">
    <source>
        <dbReference type="HAMAP-Rule" id="MF_00381"/>
    </source>
</evidence>
<keyword id="KW-0233">DNA recombination</keyword>
<keyword id="KW-0238">DNA-binding</keyword>
<keyword id="KW-0804">Transcription</keyword>
<keyword id="KW-0805">Transcription regulation</keyword>
<keyword id="KW-0810">Translation regulation</keyword>
<gene>
    <name evidence="1" type="primary">ihfB</name>
    <name evidence="1" type="synonym">himD</name>
    <name type="ordered locus">CGSHiEE_03840</name>
</gene>
<name>IHFB_HAEIE</name>
<comment type="function">
    <text evidence="1">This protein is one of the two subunits of integration host factor, a specific DNA-binding protein that functions in genetic recombination as well as in transcriptional and translational control.</text>
</comment>
<comment type="subunit">
    <text evidence="1">Heterodimer of an alpha and a beta chain.</text>
</comment>
<comment type="similarity">
    <text evidence="1">Belongs to the bacterial histone-like protein family.</text>
</comment>
<organism>
    <name type="scientific">Haemophilus influenzae (strain PittEE)</name>
    <dbReference type="NCBI Taxonomy" id="374930"/>
    <lineage>
        <taxon>Bacteria</taxon>
        <taxon>Pseudomonadati</taxon>
        <taxon>Pseudomonadota</taxon>
        <taxon>Gammaproteobacteria</taxon>
        <taxon>Pasteurellales</taxon>
        <taxon>Pasteurellaceae</taxon>
        <taxon>Haemophilus</taxon>
    </lineage>
</organism>
<proteinExistence type="inferred from homology"/>
<feature type="chain" id="PRO_1000060606" description="Integration host factor subunit beta">
    <location>
        <begin position="1"/>
        <end position="94"/>
    </location>
</feature>
<sequence length="94" mass="10502">MTKSELMEKLSAKQPTLSAKEIENMVKDILEFISQSLENGDRVEVRGFGSFSLHHRQPRLGRNPKTGDSVNLSAKSVPYFKAGKELKARVDVQA</sequence>
<reference key="1">
    <citation type="journal article" date="2007" name="Genome Biol.">
        <title>Characterization and modeling of the Haemophilus influenzae core and supragenomes based on the complete genomic sequences of Rd and 12 clinical nontypeable strains.</title>
        <authorList>
            <person name="Hogg J.S."/>
            <person name="Hu F.Z."/>
            <person name="Janto B."/>
            <person name="Boissy R."/>
            <person name="Hayes J."/>
            <person name="Keefe R."/>
            <person name="Post J.C."/>
            <person name="Ehrlich G.D."/>
        </authorList>
    </citation>
    <scope>NUCLEOTIDE SEQUENCE [LARGE SCALE GENOMIC DNA]</scope>
    <source>
        <strain>PittEE</strain>
    </source>
</reference>